<comment type="function">
    <text evidence="1">Key component of the proton channel; it plays a direct role in the translocation of protons across the membrane.</text>
</comment>
<comment type="subunit">
    <text evidence="1">F-type ATPases have 2 components, CF(1) - the catalytic core - and CF(0) - the membrane proton channel. CF(1) has five subunits: alpha(3), beta(3), gamma(1), delta(1), epsilon(1). CF(0) has three main subunits: a(1), b(2) and c(9-12). The alpha and beta chains form an alternating ring which encloses part of the gamma chain. CF(1) is attached to CF(0) by a central stalk formed by the gamma and epsilon chains, while a peripheral stalk is formed by the delta and b chains.</text>
</comment>
<comment type="subcellular location">
    <subcellularLocation>
        <location evidence="1">Cell membrane</location>
        <topology evidence="1">Multi-pass membrane protein</topology>
    </subcellularLocation>
</comment>
<comment type="similarity">
    <text evidence="1">Belongs to the ATPase A chain family.</text>
</comment>
<accession>B4U2D6</accession>
<protein>
    <recommendedName>
        <fullName evidence="1">ATP synthase subunit a</fullName>
    </recommendedName>
    <alternativeName>
        <fullName evidence="1">ATP synthase F0 sector subunit a</fullName>
    </alternativeName>
    <alternativeName>
        <fullName evidence="1">F-ATPase subunit 6</fullName>
    </alternativeName>
</protein>
<proteinExistence type="inferred from homology"/>
<reference key="1">
    <citation type="journal article" date="2008" name="PLoS ONE">
        <title>Genome sequence of a lancefield group C Streptococcus zooepidemicus strain causing epidemic nephritis: new information about an old disease.</title>
        <authorList>
            <person name="Beres S.B."/>
            <person name="Sesso R."/>
            <person name="Pinto S.W.L."/>
            <person name="Hoe N.P."/>
            <person name="Porcella S.F."/>
            <person name="Deleo F.R."/>
            <person name="Musser J.M."/>
        </authorList>
    </citation>
    <scope>NUCLEOTIDE SEQUENCE [LARGE SCALE GENOMIC DNA]</scope>
    <source>
        <strain>MGCS10565</strain>
    </source>
</reference>
<evidence type="ECO:0000255" key="1">
    <source>
        <dbReference type="HAMAP-Rule" id="MF_01393"/>
    </source>
</evidence>
<feature type="chain" id="PRO_1000145322" description="ATP synthase subunit a">
    <location>
        <begin position="1"/>
        <end position="238"/>
    </location>
</feature>
<feature type="transmembrane region" description="Helical" evidence="1">
    <location>
        <begin position="18"/>
        <end position="38"/>
    </location>
</feature>
<feature type="transmembrane region" description="Helical" evidence="1">
    <location>
        <begin position="76"/>
        <end position="96"/>
    </location>
</feature>
<feature type="transmembrane region" description="Helical" evidence="1">
    <location>
        <begin position="114"/>
        <end position="134"/>
    </location>
</feature>
<feature type="transmembrane region" description="Helical" evidence="1">
    <location>
        <begin position="166"/>
        <end position="186"/>
    </location>
</feature>
<feature type="transmembrane region" description="Helical" evidence="1">
    <location>
        <begin position="193"/>
        <end position="213"/>
    </location>
</feature>
<keyword id="KW-0066">ATP synthesis</keyword>
<keyword id="KW-1003">Cell membrane</keyword>
<keyword id="KW-0138">CF(0)</keyword>
<keyword id="KW-0375">Hydrogen ion transport</keyword>
<keyword id="KW-0406">Ion transport</keyword>
<keyword id="KW-0472">Membrane</keyword>
<keyword id="KW-0812">Transmembrane</keyword>
<keyword id="KW-1133">Transmembrane helix</keyword>
<keyword id="KW-0813">Transport</keyword>
<sequence>MEEAKVPMVELGPITFNLTLLAVCIVTILLIFGFVFWASRQMTLKPKGKQTALEYLISFVNGIGEEHLDSHLQKSYSLLLFTIFLFVAVANNLGLFTKLETTSGYNLWTSPTANLAFDLALSLFVTLLVHIEGIRRRGFGAYLKRFATPWPMTPMNLLEEFTNFLSLAIRLFGNIFAGEVVTGLIVQLANYRLYWWPIAFLVNIAWTAFSIFISCIQAFVFTKLTATYLGKKVNESEE</sequence>
<organism>
    <name type="scientific">Streptococcus equi subsp. zooepidemicus (strain MGCS10565)</name>
    <dbReference type="NCBI Taxonomy" id="552526"/>
    <lineage>
        <taxon>Bacteria</taxon>
        <taxon>Bacillati</taxon>
        <taxon>Bacillota</taxon>
        <taxon>Bacilli</taxon>
        <taxon>Lactobacillales</taxon>
        <taxon>Streptococcaceae</taxon>
        <taxon>Streptococcus</taxon>
    </lineage>
</organism>
<name>ATP6_STREM</name>
<dbReference type="EMBL" id="CP001129">
    <property type="protein sequence ID" value="ACG62153.1"/>
    <property type="molecule type" value="Genomic_DNA"/>
</dbReference>
<dbReference type="RefSeq" id="WP_012515427.1">
    <property type="nucleotide sequence ID" value="NC_011134.1"/>
</dbReference>
<dbReference type="SMR" id="B4U2D6"/>
<dbReference type="KEGG" id="sez:Sez_0793"/>
<dbReference type="HOGENOM" id="CLU_041018_2_3_9"/>
<dbReference type="Proteomes" id="UP000001873">
    <property type="component" value="Chromosome"/>
</dbReference>
<dbReference type="GO" id="GO:0005886">
    <property type="term" value="C:plasma membrane"/>
    <property type="evidence" value="ECO:0007669"/>
    <property type="project" value="UniProtKB-SubCell"/>
</dbReference>
<dbReference type="GO" id="GO:0045259">
    <property type="term" value="C:proton-transporting ATP synthase complex"/>
    <property type="evidence" value="ECO:0007669"/>
    <property type="project" value="UniProtKB-KW"/>
</dbReference>
<dbReference type="GO" id="GO:0046933">
    <property type="term" value="F:proton-transporting ATP synthase activity, rotational mechanism"/>
    <property type="evidence" value="ECO:0007669"/>
    <property type="project" value="UniProtKB-UniRule"/>
</dbReference>
<dbReference type="GO" id="GO:0042777">
    <property type="term" value="P:proton motive force-driven plasma membrane ATP synthesis"/>
    <property type="evidence" value="ECO:0007669"/>
    <property type="project" value="TreeGrafter"/>
</dbReference>
<dbReference type="CDD" id="cd00310">
    <property type="entry name" value="ATP-synt_Fo_a_6"/>
    <property type="match status" value="1"/>
</dbReference>
<dbReference type="Gene3D" id="1.20.120.220">
    <property type="entry name" value="ATP synthase, F0 complex, subunit A"/>
    <property type="match status" value="1"/>
</dbReference>
<dbReference type="HAMAP" id="MF_01393">
    <property type="entry name" value="ATP_synth_a_bact"/>
    <property type="match status" value="1"/>
</dbReference>
<dbReference type="InterPro" id="IPR045082">
    <property type="entry name" value="ATP_syn_F0_a_bact/chloroplast"/>
</dbReference>
<dbReference type="InterPro" id="IPR000568">
    <property type="entry name" value="ATP_synth_F0_asu"/>
</dbReference>
<dbReference type="InterPro" id="IPR023011">
    <property type="entry name" value="ATP_synth_F0_asu_AS"/>
</dbReference>
<dbReference type="InterPro" id="IPR035908">
    <property type="entry name" value="F0_ATP_A_sf"/>
</dbReference>
<dbReference type="NCBIfam" id="TIGR01131">
    <property type="entry name" value="ATP_synt_6_or_A"/>
    <property type="match status" value="1"/>
</dbReference>
<dbReference type="NCBIfam" id="NF004479">
    <property type="entry name" value="PRK05815.1-4"/>
    <property type="match status" value="1"/>
</dbReference>
<dbReference type="PANTHER" id="PTHR42823">
    <property type="entry name" value="ATP SYNTHASE SUBUNIT A, CHLOROPLASTIC"/>
    <property type="match status" value="1"/>
</dbReference>
<dbReference type="PANTHER" id="PTHR42823:SF3">
    <property type="entry name" value="ATP SYNTHASE SUBUNIT A, CHLOROPLASTIC"/>
    <property type="match status" value="1"/>
</dbReference>
<dbReference type="Pfam" id="PF00119">
    <property type="entry name" value="ATP-synt_A"/>
    <property type="match status" value="1"/>
</dbReference>
<dbReference type="PRINTS" id="PR00123">
    <property type="entry name" value="ATPASEA"/>
</dbReference>
<dbReference type="SUPFAM" id="SSF81336">
    <property type="entry name" value="F1F0 ATP synthase subunit A"/>
    <property type="match status" value="1"/>
</dbReference>
<dbReference type="PROSITE" id="PS00449">
    <property type="entry name" value="ATPASE_A"/>
    <property type="match status" value="1"/>
</dbReference>
<gene>
    <name evidence="1" type="primary">atpB</name>
    <name type="ordered locus">Sez_0793</name>
</gene>